<keyword id="KW-1185">Reference proteome</keyword>
<keyword id="KW-0687">Ribonucleoprotein</keyword>
<keyword id="KW-0689">Ribosomal protein</keyword>
<keyword id="KW-0694">RNA-binding</keyword>
<keyword id="KW-0699">rRNA-binding</keyword>
<evidence type="ECO:0000255" key="1">
    <source>
        <dbReference type="HAMAP-Rule" id="MF_00501"/>
    </source>
</evidence>
<evidence type="ECO:0000305" key="2"/>
<name>RL31_MYCM1</name>
<feature type="chain" id="PRO_0000173127" description="Large ribosomal subunit protein bL31">
    <location>
        <begin position="1"/>
        <end position="70"/>
    </location>
</feature>
<proteinExistence type="inferred from homology"/>
<gene>
    <name evidence="1" type="primary">rpmE</name>
    <name type="ordered locus">MMOB1280</name>
</gene>
<dbReference type="EMBL" id="AE017308">
    <property type="protein sequence ID" value="AAT27614.1"/>
    <property type="molecule type" value="Genomic_DNA"/>
</dbReference>
<dbReference type="RefSeq" id="WP_011264648.1">
    <property type="nucleotide sequence ID" value="NC_006908.1"/>
</dbReference>
<dbReference type="SMR" id="Q6KIG2"/>
<dbReference type="STRING" id="267748.MMOB1280"/>
<dbReference type="KEGG" id="mmo:MMOB1280"/>
<dbReference type="eggNOG" id="COG0254">
    <property type="taxonomic scope" value="Bacteria"/>
</dbReference>
<dbReference type="HOGENOM" id="CLU_114306_4_3_14"/>
<dbReference type="OrthoDB" id="9803251at2"/>
<dbReference type="Proteomes" id="UP000009072">
    <property type="component" value="Chromosome"/>
</dbReference>
<dbReference type="GO" id="GO:1990904">
    <property type="term" value="C:ribonucleoprotein complex"/>
    <property type="evidence" value="ECO:0007669"/>
    <property type="project" value="UniProtKB-KW"/>
</dbReference>
<dbReference type="GO" id="GO:0005840">
    <property type="term" value="C:ribosome"/>
    <property type="evidence" value="ECO:0007669"/>
    <property type="project" value="UniProtKB-KW"/>
</dbReference>
<dbReference type="GO" id="GO:0019843">
    <property type="term" value="F:rRNA binding"/>
    <property type="evidence" value="ECO:0007669"/>
    <property type="project" value="UniProtKB-KW"/>
</dbReference>
<dbReference type="GO" id="GO:0003735">
    <property type="term" value="F:structural constituent of ribosome"/>
    <property type="evidence" value="ECO:0007669"/>
    <property type="project" value="InterPro"/>
</dbReference>
<dbReference type="GO" id="GO:0006412">
    <property type="term" value="P:translation"/>
    <property type="evidence" value="ECO:0007669"/>
    <property type="project" value="UniProtKB-UniRule"/>
</dbReference>
<dbReference type="Gene3D" id="4.10.830.30">
    <property type="entry name" value="Ribosomal protein L31"/>
    <property type="match status" value="1"/>
</dbReference>
<dbReference type="HAMAP" id="MF_00501">
    <property type="entry name" value="Ribosomal_bL31_1"/>
    <property type="match status" value="1"/>
</dbReference>
<dbReference type="InterPro" id="IPR034704">
    <property type="entry name" value="Ribosomal_bL28/bL31-like_sf"/>
</dbReference>
<dbReference type="InterPro" id="IPR002150">
    <property type="entry name" value="Ribosomal_bL31"/>
</dbReference>
<dbReference type="InterPro" id="IPR027491">
    <property type="entry name" value="Ribosomal_bL31_A"/>
</dbReference>
<dbReference type="InterPro" id="IPR042105">
    <property type="entry name" value="Ribosomal_bL31_sf"/>
</dbReference>
<dbReference type="NCBIfam" id="TIGR00105">
    <property type="entry name" value="L31"/>
    <property type="match status" value="1"/>
</dbReference>
<dbReference type="NCBIfam" id="NF000612">
    <property type="entry name" value="PRK00019.1"/>
    <property type="match status" value="1"/>
</dbReference>
<dbReference type="PANTHER" id="PTHR33280">
    <property type="entry name" value="50S RIBOSOMAL PROTEIN L31, CHLOROPLASTIC"/>
    <property type="match status" value="1"/>
</dbReference>
<dbReference type="PANTHER" id="PTHR33280:SF1">
    <property type="entry name" value="LARGE RIBOSOMAL SUBUNIT PROTEIN BL31C"/>
    <property type="match status" value="1"/>
</dbReference>
<dbReference type="Pfam" id="PF01197">
    <property type="entry name" value="Ribosomal_L31"/>
    <property type="match status" value="1"/>
</dbReference>
<dbReference type="PRINTS" id="PR01249">
    <property type="entry name" value="RIBOSOMALL31"/>
</dbReference>
<dbReference type="SUPFAM" id="SSF143800">
    <property type="entry name" value="L28p-like"/>
    <property type="match status" value="1"/>
</dbReference>
<dbReference type="PROSITE" id="PS01143">
    <property type="entry name" value="RIBOSOMAL_L31"/>
    <property type="match status" value="1"/>
</dbReference>
<protein>
    <recommendedName>
        <fullName evidence="1">Large ribosomal subunit protein bL31</fullName>
    </recommendedName>
    <alternativeName>
        <fullName evidence="2">50S ribosomal protein L31</fullName>
    </alternativeName>
</protein>
<reference key="1">
    <citation type="journal article" date="2004" name="Genome Res.">
        <title>The complete genome and proteome of Mycoplasma mobile.</title>
        <authorList>
            <person name="Jaffe J.D."/>
            <person name="Stange-Thomann N."/>
            <person name="Smith C."/>
            <person name="DeCaprio D."/>
            <person name="Fisher S."/>
            <person name="Butler J."/>
            <person name="Calvo S."/>
            <person name="Elkins T."/>
            <person name="FitzGerald M.G."/>
            <person name="Hafez N."/>
            <person name="Kodira C.D."/>
            <person name="Major J."/>
            <person name="Wang S."/>
            <person name="Wilkinson J."/>
            <person name="Nicol R."/>
            <person name="Nusbaum C."/>
            <person name="Birren B."/>
            <person name="Berg H.C."/>
            <person name="Church G.M."/>
        </authorList>
    </citation>
    <scope>NUCLEOTIDE SEQUENCE [LARGE SCALE GENOMIC DNA]</scope>
    <source>
        <strain>ATCC 43663 / NCTC 11711 / 163 K</strain>
    </source>
</reference>
<accession>Q6KIG2</accession>
<comment type="function">
    <text evidence="1">Binds the 23S rRNA.</text>
</comment>
<comment type="subunit">
    <text evidence="1">Part of the 50S ribosomal subunit.</text>
</comment>
<comment type="similarity">
    <text evidence="1">Belongs to the bacterial ribosomal protein bL31 family. Type A subfamily.</text>
</comment>
<sequence length="70" mass="8004">MKPNIHPEYKNITLTCSTCEKKHIFGSTAKKSSVDVCSNCHPFFTGDRSIQRTTGRVDRFNRRLTKSAEK</sequence>
<organism>
    <name type="scientific">Mycoplasma mobile (strain ATCC 43663 / 163K / NCTC 11711)</name>
    <name type="common">Mesomycoplasma mobile</name>
    <dbReference type="NCBI Taxonomy" id="267748"/>
    <lineage>
        <taxon>Bacteria</taxon>
        <taxon>Bacillati</taxon>
        <taxon>Mycoplasmatota</taxon>
        <taxon>Mycoplasmoidales</taxon>
        <taxon>Metamycoplasmataceae</taxon>
        <taxon>Mesomycoplasma</taxon>
    </lineage>
</organism>